<evidence type="ECO:0000250" key="1">
    <source>
        <dbReference type="UniProtKB" id="P56785"/>
    </source>
</evidence>
<evidence type="ECO:0000255" key="2"/>
<evidence type="ECO:0000256" key="3">
    <source>
        <dbReference type="SAM" id="MobiDB-lite"/>
    </source>
</evidence>
<evidence type="ECO:0000305" key="4"/>
<comment type="function">
    <text evidence="1">Involved in protein precursor import into chloroplasts. May be part of an intermediate translocation complex acting as a protein-conducting channel at the inner envelope.</text>
</comment>
<comment type="subunit">
    <text evidence="1">Part of the Tic complex.</text>
</comment>
<comment type="subcellular location">
    <subcellularLocation>
        <location evidence="1">Plastid</location>
        <location evidence="1">Chloroplast inner membrane</location>
        <topology evidence="2">Multi-pass membrane protein</topology>
    </subcellularLocation>
</comment>
<comment type="similarity">
    <text evidence="4">Belongs to the TIC214 family.</text>
</comment>
<comment type="caution">
    <text evidence="4">Young tissue from this organism is photosynthetic and contains some thylakoids, although the photosynthetic activity does not exceed the light compensation point.</text>
</comment>
<feature type="chain" id="PRO_0000326572" description="Protein TIC 214">
    <location>
        <begin position="1"/>
        <end position="1750"/>
    </location>
</feature>
<feature type="transmembrane region" description="Helical" evidence="2">
    <location>
        <begin position="12"/>
        <end position="32"/>
    </location>
</feature>
<feature type="transmembrane region" description="Helical" evidence="2">
    <location>
        <begin position="69"/>
        <end position="89"/>
    </location>
</feature>
<feature type="transmembrane region" description="Helical" evidence="2">
    <location>
        <begin position="97"/>
        <end position="117"/>
    </location>
</feature>
<feature type="transmembrane region" description="Helical" evidence="2">
    <location>
        <begin position="129"/>
        <end position="149"/>
    </location>
</feature>
<feature type="transmembrane region" description="Helical" evidence="2">
    <location>
        <begin position="177"/>
        <end position="197"/>
    </location>
</feature>
<feature type="transmembrane region" description="Helical" evidence="2">
    <location>
        <begin position="216"/>
        <end position="236"/>
    </location>
</feature>
<feature type="region of interest" description="Disordered" evidence="3">
    <location>
        <begin position="260"/>
        <end position="282"/>
    </location>
</feature>
<feature type="region of interest" description="Disordered" evidence="3">
    <location>
        <begin position="617"/>
        <end position="638"/>
    </location>
</feature>
<feature type="region of interest" description="Disordered" evidence="3">
    <location>
        <begin position="718"/>
        <end position="738"/>
    </location>
</feature>
<feature type="region of interest" description="Disordered" evidence="3">
    <location>
        <begin position="1205"/>
        <end position="1225"/>
    </location>
</feature>
<feature type="region of interest" description="Disordered" evidence="3">
    <location>
        <begin position="1419"/>
        <end position="1512"/>
    </location>
</feature>
<feature type="compositionally biased region" description="Basic and acidic residues" evidence="3">
    <location>
        <begin position="260"/>
        <end position="277"/>
    </location>
</feature>
<feature type="compositionally biased region" description="Low complexity" evidence="3">
    <location>
        <begin position="617"/>
        <end position="629"/>
    </location>
</feature>
<feature type="compositionally biased region" description="Basic and acidic residues" evidence="3">
    <location>
        <begin position="727"/>
        <end position="738"/>
    </location>
</feature>
<feature type="compositionally biased region" description="Basic and acidic residues" evidence="3">
    <location>
        <begin position="1420"/>
        <end position="1512"/>
    </location>
</feature>
<organism>
    <name type="scientific">Cuscuta reflexa</name>
    <name type="common">Southern Asian dodder</name>
    <dbReference type="NCBI Taxonomy" id="4129"/>
    <lineage>
        <taxon>Eukaryota</taxon>
        <taxon>Viridiplantae</taxon>
        <taxon>Streptophyta</taxon>
        <taxon>Embryophyta</taxon>
        <taxon>Tracheophyta</taxon>
        <taxon>Spermatophyta</taxon>
        <taxon>Magnoliopsida</taxon>
        <taxon>eudicotyledons</taxon>
        <taxon>Gunneridae</taxon>
        <taxon>Pentapetalae</taxon>
        <taxon>asterids</taxon>
        <taxon>lamiids</taxon>
        <taxon>Solanales</taxon>
        <taxon>Convolvulaceae</taxon>
        <taxon>Cuscuteae</taxon>
        <taxon>Cuscuta</taxon>
        <taxon>Cuscuta subgen. Monogynella</taxon>
    </lineage>
</organism>
<keyword id="KW-0150">Chloroplast</keyword>
<keyword id="KW-0472">Membrane</keyword>
<keyword id="KW-0934">Plastid</keyword>
<keyword id="KW-1001">Plastid inner membrane</keyword>
<keyword id="KW-0653">Protein transport</keyword>
<keyword id="KW-0812">Transmembrane</keyword>
<keyword id="KW-1133">Transmembrane helix</keyword>
<keyword id="KW-0813">Transport</keyword>
<geneLocation type="plastid"/>
<protein>
    <recommendedName>
        <fullName evidence="1">Protein TIC 214</fullName>
    </recommendedName>
    <alternativeName>
        <fullName evidence="1">Translocon at the inner envelope membrane of chloroplasts 214</fullName>
        <shortName evidence="1">AtTIC214</shortName>
    </alternativeName>
</protein>
<sequence>MIVNNMYNLCPKIINSVIVVGLYYGFMTALSIKPSHIFLIRALLLEKETNKNKGVAEETKKKVAATTGFIMGQFIRLISIYYGPLYVALGRPHTITILALPYLLIHLFWNTDKSFFAYDSNKLNSIRNLEIYCVFLNHFALQLLNSCILPNSTLARLVSIYMFRCNNKILFLTSSFFAWFIGQLFILNCFELVLVWIRKKNSIRSTFRNYLLRNSIFVIFLNCIFGSLLFLLSIQCLGRIPSPIPTQKLSEVSKIEQRERERLQKEEERGVEKKEQSTEEDPSLFLEEKAGWDKEKEPDYKFPDSELEILQKKKIKNQEFEKHLAALLFDYKRWTRPFRYIKNNHLEQALRNEMSQYFFDTYQSDGKNRLSFTHPISLSAFLKMIKPKIPLLLVEKNTFNSNSLDNGWVYRNKKQMNYLRIDFLNRVKNLDKAKAVALPRIEFETTRTQLCIHNDENKQEYLPENFDPLLNGPYRGRIKKGLLPINDTLSEHLRETVMLNRLHALVLLNTNSKNSNQKMSTFGKKPLEICGFSTFNLNLMDSELKTEVLVNPIETHDLNFLKKYSTIEEISKKVPRWSYKLITELEQISYYKNPPDDHDIRSRKGISVVIFDPNKEATTTNSKTNTTKDTNLETKKESESDEDKLVVIRYPQQSDFRQGLIKDSMRNQRRKIIIWELFNANVHSPLFFDRLTIVFSFPRLKQLFINLSARHVFGISKSTDKKRGKTKKEEKRENKQREQKERLEIGEAWDVFPVAQIIRGFLLLNQTFIRKKIILPSLIIGKNIGRILLFQIPEWSEDLRELNRETHIKCTYNGIPLSEKEFPENWLTEGIQIKILFPFCLKPWHPYKPQTSHYDFCFLTVWGRETEQPFGHPRKTPSFFEPVLQELDKKIVNINIKARIFSKVKINLFKRFSKEKDFQISNQIINESFQQIEEIPGCTNSSLIEKMQNMAHRTSTIKKEIERVTEEKKRVTLERYICFYKRSYRLALAKNIFKKVKVKVTKNRLICKFFFFKKLFNQRIYNNIFLETIYICRITTQLFLESTKKLIYKYIFNYERNKKRIDINKETKNKFNLISKLKTYNHCKKNSYLSCDLSNLSQAYVFYKIPQTGVLNVCKLISALQQNGIPSFIKTQIKDSFHTQGICKYELIQKKLQWPKTNQWKNWLRVNSEYDLSHILWFSLISQKQKWRNRVEQYHRSKEKYLNKRNSRGNYRLSDSKKQNVPKPVSDNYKKCYQYDLLSYKSINYAKKSASVISRSTPKGQAISYNDNMLQNIPGKIKRLYITYIPYIGKTLDRKYLIWKNIHFYLRKKVDIESWVAVNTSSDKDSTIGTYNYQLIDQIDKKEKELFSIPIRQNTEINRPNSTNSLVDWMGMNEQILNRPITNLELWFFPEFVWFFNVYKTKPWIIPSKILILNSNLSETDSKQKSETDSKQKSETDSKQKSETDSKQKSETDSKQKSETDSKQKSETDSKQKSETDSKQKSETDSKQKNNAEIQKDLDEDSTKSDKKNKKEKETELELFAKKYFLFQLRGDPTFKKSFFKNIQIYCLLLRLTNRKKMTLSCIQRRKFNLRIMPTMTNLFNVPEFLKMTGLVMDPLPLLIKTNGKFLLYQIVGISLVHKSKHQTNQTYRKRIIIRAGMTNLENNHLDVLVLENILSSRCRREFRTLICLNYKNWNGVNTNSIFCSKNCNQFWEERKPQYNEKRELIQKFLWPNYRLEDLACVNRYSFDITNGSRFSLLRFHMYLPWKIHG</sequence>
<gene>
    <name evidence="1" type="primary">TIC214</name>
    <name type="synonym">ycf1</name>
</gene>
<dbReference type="EMBL" id="AM711640">
    <property type="protein sequence ID" value="CAM98440.1"/>
    <property type="molecule type" value="Genomic_DNA"/>
</dbReference>
<dbReference type="RefSeq" id="YP_001430153.1">
    <property type="nucleotide sequence ID" value="NC_009766.1"/>
</dbReference>
<dbReference type="GeneID" id="5536648"/>
<dbReference type="GO" id="GO:0009706">
    <property type="term" value="C:chloroplast inner membrane"/>
    <property type="evidence" value="ECO:0007669"/>
    <property type="project" value="UniProtKB-SubCell"/>
</dbReference>
<dbReference type="GO" id="GO:0015031">
    <property type="term" value="P:protein transport"/>
    <property type="evidence" value="ECO:0007669"/>
    <property type="project" value="UniProtKB-KW"/>
</dbReference>
<dbReference type="InterPro" id="IPR008896">
    <property type="entry name" value="TIC214"/>
</dbReference>
<dbReference type="PANTHER" id="PTHR33163:SF40">
    <property type="entry name" value="PROTEIN TIC 214"/>
    <property type="match status" value="1"/>
</dbReference>
<dbReference type="PANTHER" id="PTHR33163">
    <property type="entry name" value="PROTEIN TIC 214-RELATED"/>
    <property type="match status" value="1"/>
</dbReference>
<dbReference type="Pfam" id="PF05758">
    <property type="entry name" value="Ycf1"/>
    <property type="match status" value="3"/>
</dbReference>
<reference key="1">
    <citation type="journal article" date="2007" name="BMC Plant Biol.">
        <title>Complete DNA sequences of the plastid genomes of two parasitic flowering plant species, Cuscuta reflexa and Cuscuta gronovii.</title>
        <authorList>
            <person name="Funk H.T."/>
            <person name="Berg S."/>
            <person name="Krupinska K."/>
            <person name="Maier U.-G."/>
            <person name="Krause K."/>
        </authorList>
    </citation>
    <scope>NUCLEOTIDE SEQUENCE [LARGE SCALE GENOMIC DNA]</scope>
</reference>
<accession>A7M9B2</accession>
<proteinExistence type="inferred from homology"/>
<name>TI214_CUSRE</name>